<proteinExistence type="inferred from homology"/>
<gene>
    <name evidence="1" type="primary">rplI</name>
    <name type="ordered locus">Lcho_2827</name>
</gene>
<sequence>MQVILLEKVANLGVLGDVVKVKDGYARNFLIPTGAARRATEKAVAEFQARRAELEKVQAEKLAAAKAQGDKLAGKTVSISQKAGVDGRLFGSVTNADIAESLKALGFDVVKAQIRLPNGPLKTVGEFPVSVALHTDAVVEITVAVVGEHV</sequence>
<evidence type="ECO:0000255" key="1">
    <source>
        <dbReference type="HAMAP-Rule" id="MF_00503"/>
    </source>
</evidence>
<evidence type="ECO:0000305" key="2"/>
<feature type="chain" id="PRO_1000126934" description="Large ribosomal subunit protein bL9">
    <location>
        <begin position="1"/>
        <end position="150"/>
    </location>
</feature>
<keyword id="KW-1185">Reference proteome</keyword>
<keyword id="KW-0687">Ribonucleoprotein</keyword>
<keyword id="KW-0689">Ribosomal protein</keyword>
<keyword id="KW-0694">RNA-binding</keyword>
<keyword id="KW-0699">rRNA-binding</keyword>
<organism>
    <name type="scientific">Leptothrix cholodnii (strain ATCC 51168 / LMG 8142 / SP-6)</name>
    <name type="common">Leptothrix discophora (strain SP-6)</name>
    <dbReference type="NCBI Taxonomy" id="395495"/>
    <lineage>
        <taxon>Bacteria</taxon>
        <taxon>Pseudomonadati</taxon>
        <taxon>Pseudomonadota</taxon>
        <taxon>Betaproteobacteria</taxon>
        <taxon>Burkholderiales</taxon>
        <taxon>Sphaerotilaceae</taxon>
        <taxon>Leptothrix</taxon>
    </lineage>
</organism>
<comment type="function">
    <text evidence="1">Binds to the 23S rRNA.</text>
</comment>
<comment type="similarity">
    <text evidence="1">Belongs to the bacterial ribosomal protein bL9 family.</text>
</comment>
<accession>B1XXH2</accession>
<protein>
    <recommendedName>
        <fullName evidence="1">Large ribosomal subunit protein bL9</fullName>
    </recommendedName>
    <alternativeName>
        <fullName evidence="2">50S ribosomal protein L9</fullName>
    </alternativeName>
</protein>
<reference key="1">
    <citation type="submission" date="2008-03" db="EMBL/GenBank/DDBJ databases">
        <title>Complete sequence of Leptothrix cholodnii SP-6.</title>
        <authorList>
            <consortium name="US DOE Joint Genome Institute"/>
            <person name="Copeland A."/>
            <person name="Lucas S."/>
            <person name="Lapidus A."/>
            <person name="Glavina del Rio T."/>
            <person name="Dalin E."/>
            <person name="Tice H."/>
            <person name="Bruce D."/>
            <person name="Goodwin L."/>
            <person name="Pitluck S."/>
            <person name="Chertkov O."/>
            <person name="Brettin T."/>
            <person name="Detter J.C."/>
            <person name="Han C."/>
            <person name="Kuske C.R."/>
            <person name="Schmutz J."/>
            <person name="Larimer F."/>
            <person name="Land M."/>
            <person name="Hauser L."/>
            <person name="Kyrpides N."/>
            <person name="Lykidis A."/>
            <person name="Emerson D."/>
            <person name="Richardson P."/>
        </authorList>
    </citation>
    <scope>NUCLEOTIDE SEQUENCE [LARGE SCALE GENOMIC DNA]</scope>
    <source>
        <strain>ATCC 51168 / LMG 8142 / SP-6</strain>
    </source>
</reference>
<name>RL9_LEPCP</name>
<dbReference type="EMBL" id="CP001013">
    <property type="protein sequence ID" value="ACB35092.1"/>
    <property type="molecule type" value="Genomic_DNA"/>
</dbReference>
<dbReference type="RefSeq" id="WP_012347846.1">
    <property type="nucleotide sequence ID" value="NC_010524.1"/>
</dbReference>
<dbReference type="SMR" id="B1XXH2"/>
<dbReference type="STRING" id="395495.Lcho_2827"/>
<dbReference type="KEGG" id="lch:Lcho_2827"/>
<dbReference type="eggNOG" id="COG0359">
    <property type="taxonomic scope" value="Bacteria"/>
</dbReference>
<dbReference type="HOGENOM" id="CLU_078938_4_1_4"/>
<dbReference type="OrthoDB" id="9788336at2"/>
<dbReference type="Proteomes" id="UP000001693">
    <property type="component" value="Chromosome"/>
</dbReference>
<dbReference type="GO" id="GO:1990904">
    <property type="term" value="C:ribonucleoprotein complex"/>
    <property type="evidence" value="ECO:0007669"/>
    <property type="project" value="UniProtKB-KW"/>
</dbReference>
<dbReference type="GO" id="GO:0005840">
    <property type="term" value="C:ribosome"/>
    <property type="evidence" value="ECO:0007669"/>
    <property type="project" value="UniProtKB-KW"/>
</dbReference>
<dbReference type="GO" id="GO:0019843">
    <property type="term" value="F:rRNA binding"/>
    <property type="evidence" value="ECO:0007669"/>
    <property type="project" value="UniProtKB-UniRule"/>
</dbReference>
<dbReference type="GO" id="GO:0003735">
    <property type="term" value="F:structural constituent of ribosome"/>
    <property type="evidence" value="ECO:0007669"/>
    <property type="project" value="InterPro"/>
</dbReference>
<dbReference type="GO" id="GO:0006412">
    <property type="term" value="P:translation"/>
    <property type="evidence" value="ECO:0007669"/>
    <property type="project" value="UniProtKB-UniRule"/>
</dbReference>
<dbReference type="Gene3D" id="3.10.430.100">
    <property type="entry name" value="Ribosomal protein L9, C-terminal domain"/>
    <property type="match status" value="1"/>
</dbReference>
<dbReference type="Gene3D" id="3.40.5.10">
    <property type="entry name" value="Ribosomal protein L9, N-terminal domain"/>
    <property type="match status" value="1"/>
</dbReference>
<dbReference type="HAMAP" id="MF_00503">
    <property type="entry name" value="Ribosomal_bL9"/>
    <property type="match status" value="1"/>
</dbReference>
<dbReference type="InterPro" id="IPR000244">
    <property type="entry name" value="Ribosomal_bL9"/>
</dbReference>
<dbReference type="InterPro" id="IPR009027">
    <property type="entry name" value="Ribosomal_bL9/RNase_H1_N"/>
</dbReference>
<dbReference type="InterPro" id="IPR020594">
    <property type="entry name" value="Ribosomal_bL9_bac/chp"/>
</dbReference>
<dbReference type="InterPro" id="IPR020069">
    <property type="entry name" value="Ribosomal_bL9_C"/>
</dbReference>
<dbReference type="InterPro" id="IPR036791">
    <property type="entry name" value="Ribosomal_bL9_C_sf"/>
</dbReference>
<dbReference type="InterPro" id="IPR020070">
    <property type="entry name" value="Ribosomal_bL9_N"/>
</dbReference>
<dbReference type="InterPro" id="IPR036935">
    <property type="entry name" value="Ribosomal_bL9_N_sf"/>
</dbReference>
<dbReference type="NCBIfam" id="TIGR00158">
    <property type="entry name" value="L9"/>
    <property type="match status" value="1"/>
</dbReference>
<dbReference type="PANTHER" id="PTHR21368">
    <property type="entry name" value="50S RIBOSOMAL PROTEIN L9"/>
    <property type="match status" value="1"/>
</dbReference>
<dbReference type="Pfam" id="PF03948">
    <property type="entry name" value="Ribosomal_L9_C"/>
    <property type="match status" value="1"/>
</dbReference>
<dbReference type="Pfam" id="PF01281">
    <property type="entry name" value="Ribosomal_L9_N"/>
    <property type="match status" value="1"/>
</dbReference>
<dbReference type="SUPFAM" id="SSF55658">
    <property type="entry name" value="L9 N-domain-like"/>
    <property type="match status" value="1"/>
</dbReference>
<dbReference type="SUPFAM" id="SSF55653">
    <property type="entry name" value="Ribosomal protein L9 C-domain"/>
    <property type="match status" value="1"/>
</dbReference>
<dbReference type="PROSITE" id="PS00651">
    <property type="entry name" value="RIBOSOMAL_L9"/>
    <property type="match status" value="1"/>
</dbReference>